<proteinExistence type="evidence at protein level"/>
<name>TRAC4_ECOLX</name>
<comment type="function">
    <text>Required for autonomous replication in E.coli. Transferred into the recipient cell during bacterial conjugation. Catalyzes the synthesis of short oligoribonucleotide primers with CpA or pCpA at their 5'-termini on a single-stranded template DNA.</text>
</comment>
<comment type="alternative products">
    <event type="alternative initiation"/>
    <isoform>
        <id>P27189-1</id>
        <name>TraC-1</name>
        <sequence type="displayed"/>
    </isoform>
    <isoform>
        <id>P27189-2</id>
        <name>TraC-2</name>
        <sequence type="described" ref="VSP_018716"/>
    </isoform>
</comment>
<sequence length="1061" mass="116722">MAEVKKPFHEQVAERLIEQLKAGTAPWQKPWEPGMPGSFIPLNPTTGKRYKGINAIQLMAQGHADPRWMTYKQAAAAGAQVRRGEKGTPIQYWKFSEEQTKTDEQTGKPVLDANGDPVKVTVQLERPRVFFATVFNAEQIDGLPPLERKEQTWSAVERAEHILAASGATIRHGEHDRAFYRPSTDSIHLPDKGQFPSADNYYATALHELGHWTGHPSRLDRDLAHPFGSEGYAKEELRAEIASMILGDELGIGHDPGQHAAYVGSWIKALQEDPLEIFRAAADAEKIQDFVLAFEQKQIQEQTTQQAIEPAQGATMEQQQDQVARPAIAPADELIAQTLRMYRAGAEPAEGNQSLAALTETTLGFELPADWTGRVQVQANVEVEHDGERSVVPAGDREPEFWGVYANHAWGGHQWLADFAGPDAQTNAEALADRLAVIDAYATANEYEQAAKFARIHEERVRRDPNSTDEDRVAAKEARKAAEGTAMLHDEDLQRRIADYEREQQEMAQAMNAAEQPAAAQAPAKPERAYLNVPFKEKDEVKALGARWDRQERAWYVPAGVDPAPFAKWAREGATAAVEARAEAQPTQPTAERPNAAQERVYLAVPYGERQVAKAAGAQWDKVAKSWYAGPNADMGKLQRWLPDNVPTQQSPAVTPEDEFAEALKSMGCVVTPGGEHPIMDGKKHRIETEGDKKGEKSGFYVGHLDGHPAGYIKNNRTGVEMKWKAKGYALDPAEKAKMQAEAAAKLAARAEEQERQHEATAQRIGRQAQSLVPITEPTPYLRDKGLQVHAGVLTDQEGQKTYIPAYDADGKQWTMQYIQEDGTKRFAKDSRKEGCFHVVGGMDALAAAPALVIGEGYATAATVAEALGHATVAAFDSGNLQAVAEALHAKFPDKPVVIAGDDDRQVQITQGVNPGRTKAQEAAKAVGGKAIFPIFAPGENAYPKELPPITPENYRNHLHAEKRLADAAAGKVQLSEADTAKLKESLLNDGQLAALSNMKKHTDFNDLSERSSLGKDGVERQVRSAVGKVLLDEGQRQKVQQLKQQDIEQQEQRQRRARTY</sequence>
<protein>
    <recommendedName>
        <fullName>DNA primase TraC</fullName>
        <ecNumber>2.7.7.-</ecNumber>
    </recommendedName>
    <alternativeName>
        <fullName>Replication primase</fullName>
    </alternativeName>
</protein>
<evidence type="ECO:0000255" key="1">
    <source>
        <dbReference type="PROSITE-ProRule" id="PRU00995"/>
    </source>
</evidence>
<evidence type="ECO:0000256" key="2">
    <source>
        <dbReference type="SAM" id="MobiDB-lite"/>
    </source>
</evidence>
<evidence type="ECO:0000305" key="3"/>
<dbReference type="EC" id="2.7.7.-"/>
<dbReference type="EMBL" id="X59793">
    <property type="protein sequence ID" value="CAA42455.1"/>
    <property type="molecule type" value="Genomic_DNA"/>
</dbReference>
<dbReference type="EMBL" id="X59793">
    <property type="protein sequence ID" value="CAA42456.1"/>
    <property type="molecule type" value="Genomic_DNA"/>
</dbReference>
<dbReference type="PIR" id="S37667">
    <property type="entry name" value="S37667"/>
</dbReference>
<dbReference type="RefSeq" id="WP_011205813.1">
    <property type="nucleotide sequence ID" value="NZ_VMTS01000048.1"/>
</dbReference>
<dbReference type="SMR" id="P27189"/>
<dbReference type="BindingDB" id="P27189"/>
<dbReference type="ChEMBL" id="CHEMBL1075082"/>
<dbReference type="GO" id="GO:0000428">
    <property type="term" value="C:DNA-directed RNA polymerase complex"/>
    <property type="evidence" value="ECO:0007669"/>
    <property type="project" value="UniProtKB-KW"/>
</dbReference>
<dbReference type="GO" id="GO:0016779">
    <property type="term" value="F:nucleotidyltransferase activity"/>
    <property type="evidence" value="ECO:0007669"/>
    <property type="project" value="UniProtKB-KW"/>
</dbReference>
<dbReference type="GO" id="GO:0003697">
    <property type="term" value="F:single-stranded DNA binding"/>
    <property type="evidence" value="ECO:0007669"/>
    <property type="project" value="InterPro"/>
</dbReference>
<dbReference type="GO" id="GO:0006260">
    <property type="term" value="P:DNA replication"/>
    <property type="evidence" value="ECO:0007669"/>
    <property type="project" value="UniProtKB-KW"/>
</dbReference>
<dbReference type="CDD" id="cd01029">
    <property type="entry name" value="TOPRIM_primases"/>
    <property type="match status" value="1"/>
</dbReference>
<dbReference type="InterPro" id="IPR013610">
    <property type="entry name" value="ArdC_N"/>
</dbReference>
<dbReference type="InterPro" id="IPR043764">
    <property type="entry name" value="DUF5710"/>
</dbReference>
<dbReference type="InterPro" id="IPR041459">
    <property type="entry name" value="MPTase-PolyVal"/>
</dbReference>
<dbReference type="InterPro" id="IPR034154">
    <property type="entry name" value="TOPRIM_DnaG/twinkle"/>
</dbReference>
<dbReference type="InterPro" id="IPR006171">
    <property type="entry name" value="TOPRIM_dom"/>
</dbReference>
<dbReference type="Pfam" id="PF08401">
    <property type="entry name" value="ArdcN"/>
    <property type="match status" value="1"/>
</dbReference>
<dbReference type="Pfam" id="PF18974">
    <property type="entry name" value="DUF5710"/>
    <property type="match status" value="2"/>
</dbReference>
<dbReference type="Pfam" id="PF18818">
    <property type="entry name" value="MPTase-PolyVal"/>
    <property type="match status" value="1"/>
</dbReference>
<dbReference type="Pfam" id="PF13362">
    <property type="entry name" value="Toprim_3"/>
    <property type="match status" value="1"/>
</dbReference>
<dbReference type="SMART" id="SM00493">
    <property type="entry name" value="TOPRIM"/>
    <property type="match status" value="1"/>
</dbReference>
<dbReference type="PROSITE" id="PS50880">
    <property type="entry name" value="TOPRIM"/>
    <property type="match status" value="1"/>
</dbReference>
<reference key="1">
    <citation type="journal article" date="1991" name="DNA Seq.">
        <title>Gene organization and nucleotide sequence of the primase region of IncP plasmids RP4 and R751.</title>
        <authorList>
            <person name="Miele L."/>
            <person name="Strack B."/>
            <person name="Kruft V."/>
            <person name="Lanka E."/>
        </authorList>
    </citation>
    <scope>NUCLEOTIDE SEQUENCE [GENOMIC DNA]</scope>
    <scope>PROTEIN SEQUENCE OF 1-14 AND 316-333</scope>
    <source>
        <strain>ATCC 33694 / HB101</strain>
    </source>
</reference>
<geneLocation type="plasmid">
    <name>IncP-alpha RP4</name>
</geneLocation>
<feature type="chain" id="PRO_0000007251" description="DNA primase TraC">
    <location>
        <begin position="1"/>
        <end position="1061"/>
    </location>
</feature>
<feature type="domain" description="Toprim" evidence="1">
    <location>
        <begin position="850"/>
        <end position="938"/>
    </location>
</feature>
<feature type="region of interest" description="Disordered" evidence="2">
    <location>
        <begin position="1034"/>
        <end position="1061"/>
    </location>
</feature>
<feature type="splice variant" id="VSP_018716" description="In isoform TraC-2." evidence="3">
    <location>
        <begin position="1"/>
        <end position="315"/>
    </location>
</feature>
<organism>
    <name type="scientific">Escherichia coli</name>
    <dbReference type="NCBI Taxonomy" id="562"/>
    <lineage>
        <taxon>Bacteria</taxon>
        <taxon>Pseudomonadati</taxon>
        <taxon>Pseudomonadota</taxon>
        <taxon>Gammaproteobacteria</taxon>
        <taxon>Enterobacterales</taxon>
        <taxon>Enterobacteriaceae</taxon>
        <taxon>Escherichia</taxon>
    </lineage>
</organism>
<keyword id="KW-0024">Alternative initiation</keyword>
<keyword id="KW-0903">Direct protein sequencing</keyword>
<keyword id="KW-0235">DNA replication</keyword>
<keyword id="KW-0240">DNA-directed RNA polymerase</keyword>
<keyword id="KW-0548">Nucleotidyltransferase</keyword>
<keyword id="KW-0614">Plasmid</keyword>
<keyword id="KW-0804">Transcription</keyword>
<keyword id="KW-0808">Transferase</keyword>
<gene>
    <name type="primary">traC</name>
</gene>
<accession>P27189</accession>
<accession>P27184</accession>